<reference key="1">
    <citation type="journal article" date="2005" name="Nucleic Acids Res.">
        <title>The genome sequence of Salmonella enterica serovar Choleraesuis, a highly invasive and resistant zoonotic pathogen.</title>
        <authorList>
            <person name="Chiu C.-H."/>
            <person name="Tang P."/>
            <person name="Chu C."/>
            <person name="Hu S."/>
            <person name="Bao Q."/>
            <person name="Yu J."/>
            <person name="Chou Y.-Y."/>
            <person name="Wang H.-S."/>
            <person name="Lee Y.-S."/>
        </authorList>
    </citation>
    <scope>NUCLEOTIDE SEQUENCE [LARGE SCALE GENOMIC DNA]</scope>
    <source>
        <strain>SC-B67</strain>
    </source>
</reference>
<feature type="chain" id="PRO_0000364686" description="Fructose-1,6-bisphosphatase class 1">
    <location>
        <begin position="1"/>
        <end position="332"/>
    </location>
</feature>
<feature type="binding site" evidence="1">
    <location>
        <position position="89"/>
    </location>
    <ligand>
        <name>Mg(2+)</name>
        <dbReference type="ChEBI" id="CHEBI:18420"/>
        <label>1</label>
    </ligand>
</feature>
<feature type="binding site" evidence="1">
    <location>
        <position position="110"/>
    </location>
    <ligand>
        <name>Mg(2+)</name>
        <dbReference type="ChEBI" id="CHEBI:18420"/>
        <label>1</label>
    </ligand>
</feature>
<feature type="binding site" evidence="1">
    <location>
        <position position="110"/>
    </location>
    <ligand>
        <name>Mg(2+)</name>
        <dbReference type="ChEBI" id="CHEBI:18420"/>
        <label>2</label>
    </ligand>
</feature>
<feature type="binding site" evidence="1">
    <location>
        <position position="112"/>
    </location>
    <ligand>
        <name>Mg(2+)</name>
        <dbReference type="ChEBI" id="CHEBI:18420"/>
        <label>1</label>
    </ligand>
</feature>
<feature type="binding site" evidence="1">
    <location>
        <begin position="113"/>
        <end position="116"/>
    </location>
    <ligand>
        <name>substrate</name>
    </ligand>
</feature>
<feature type="binding site" evidence="1">
    <location>
        <position position="113"/>
    </location>
    <ligand>
        <name>Mg(2+)</name>
        <dbReference type="ChEBI" id="CHEBI:18420"/>
        <label>2</label>
    </ligand>
</feature>
<feature type="binding site" evidence="1">
    <location>
        <position position="206"/>
    </location>
    <ligand>
        <name>substrate</name>
    </ligand>
</feature>
<feature type="binding site" evidence="1">
    <location>
        <position position="239"/>
    </location>
    <ligand>
        <name>substrate</name>
    </ligand>
</feature>
<feature type="binding site" evidence="1">
    <location>
        <begin position="257"/>
        <end position="259"/>
    </location>
    <ligand>
        <name>substrate</name>
    </ligand>
</feature>
<feature type="binding site" evidence="1">
    <location>
        <position position="269"/>
    </location>
    <ligand>
        <name>substrate</name>
    </ligand>
</feature>
<feature type="binding site" evidence="1">
    <location>
        <position position="275"/>
    </location>
    <ligand>
        <name>Mg(2+)</name>
        <dbReference type="ChEBI" id="CHEBI:18420"/>
        <label>2</label>
    </ligand>
</feature>
<comment type="catalytic activity">
    <reaction evidence="1">
        <text>beta-D-fructose 1,6-bisphosphate + H2O = beta-D-fructose 6-phosphate + phosphate</text>
        <dbReference type="Rhea" id="RHEA:11064"/>
        <dbReference type="ChEBI" id="CHEBI:15377"/>
        <dbReference type="ChEBI" id="CHEBI:32966"/>
        <dbReference type="ChEBI" id="CHEBI:43474"/>
        <dbReference type="ChEBI" id="CHEBI:57634"/>
        <dbReference type="EC" id="3.1.3.11"/>
    </reaction>
</comment>
<comment type="cofactor">
    <cofactor evidence="1">
        <name>Mg(2+)</name>
        <dbReference type="ChEBI" id="CHEBI:18420"/>
    </cofactor>
    <text evidence="1">Binds 2 magnesium ions per subunit.</text>
</comment>
<comment type="pathway">
    <text evidence="1">Carbohydrate biosynthesis; gluconeogenesis.</text>
</comment>
<comment type="subunit">
    <text evidence="1">Homotetramer.</text>
</comment>
<comment type="subcellular location">
    <subcellularLocation>
        <location evidence="1">Cytoplasm</location>
    </subcellularLocation>
</comment>
<comment type="similarity">
    <text evidence="1">Belongs to the FBPase class 1 family.</text>
</comment>
<protein>
    <recommendedName>
        <fullName evidence="1">Fructose-1,6-bisphosphatase class 1</fullName>
        <shortName evidence="1">FBPase class 1</shortName>
        <ecNumber evidence="1">3.1.3.11</ecNumber>
    </recommendedName>
    <alternativeName>
        <fullName evidence="1">D-fructose-1,6-bisphosphate 1-phosphohydrolase class 1</fullName>
    </alternativeName>
</protein>
<keyword id="KW-0119">Carbohydrate metabolism</keyword>
<keyword id="KW-0963">Cytoplasm</keyword>
<keyword id="KW-0378">Hydrolase</keyword>
<keyword id="KW-0460">Magnesium</keyword>
<keyword id="KW-0479">Metal-binding</keyword>
<proteinExistence type="inferred from homology"/>
<dbReference type="EC" id="3.1.3.11" evidence="1"/>
<dbReference type="EMBL" id="AE017220">
    <property type="protein sequence ID" value="AAX68195.1"/>
    <property type="molecule type" value="Genomic_DNA"/>
</dbReference>
<dbReference type="RefSeq" id="WP_000853764.1">
    <property type="nucleotide sequence ID" value="NC_006905.1"/>
</dbReference>
<dbReference type="SMR" id="Q57GG7"/>
<dbReference type="KEGG" id="sec:SCH_4289"/>
<dbReference type="HOGENOM" id="CLU_039977_2_2_6"/>
<dbReference type="UniPathway" id="UPA00138"/>
<dbReference type="Proteomes" id="UP000000538">
    <property type="component" value="Chromosome"/>
</dbReference>
<dbReference type="GO" id="GO:0005829">
    <property type="term" value="C:cytosol"/>
    <property type="evidence" value="ECO:0007669"/>
    <property type="project" value="TreeGrafter"/>
</dbReference>
<dbReference type="GO" id="GO:0042132">
    <property type="term" value="F:fructose 1,6-bisphosphate 1-phosphatase activity"/>
    <property type="evidence" value="ECO:0007669"/>
    <property type="project" value="UniProtKB-UniRule"/>
</dbReference>
<dbReference type="GO" id="GO:0000287">
    <property type="term" value="F:magnesium ion binding"/>
    <property type="evidence" value="ECO:0007669"/>
    <property type="project" value="UniProtKB-UniRule"/>
</dbReference>
<dbReference type="GO" id="GO:0030388">
    <property type="term" value="P:fructose 1,6-bisphosphate metabolic process"/>
    <property type="evidence" value="ECO:0007669"/>
    <property type="project" value="TreeGrafter"/>
</dbReference>
<dbReference type="GO" id="GO:0006002">
    <property type="term" value="P:fructose 6-phosphate metabolic process"/>
    <property type="evidence" value="ECO:0007669"/>
    <property type="project" value="TreeGrafter"/>
</dbReference>
<dbReference type="GO" id="GO:0006000">
    <property type="term" value="P:fructose metabolic process"/>
    <property type="evidence" value="ECO:0007669"/>
    <property type="project" value="TreeGrafter"/>
</dbReference>
<dbReference type="GO" id="GO:0006094">
    <property type="term" value="P:gluconeogenesis"/>
    <property type="evidence" value="ECO:0007669"/>
    <property type="project" value="UniProtKB-UniRule"/>
</dbReference>
<dbReference type="GO" id="GO:0005986">
    <property type="term" value="P:sucrose biosynthetic process"/>
    <property type="evidence" value="ECO:0007669"/>
    <property type="project" value="TreeGrafter"/>
</dbReference>
<dbReference type="CDD" id="cd00354">
    <property type="entry name" value="FBPase"/>
    <property type="match status" value="1"/>
</dbReference>
<dbReference type="FunFam" id="3.30.540.10:FF:000002">
    <property type="entry name" value="Fructose-1,6-bisphosphatase class 1"/>
    <property type="match status" value="1"/>
</dbReference>
<dbReference type="FunFam" id="3.40.190.80:FF:000001">
    <property type="entry name" value="Fructose-1,6-bisphosphatase class 1"/>
    <property type="match status" value="1"/>
</dbReference>
<dbReference type="Gene3D" id="3.40.190.80">
    <property type="match status" value="1"/>
</dbReference>
<dbReference type="Gene3D" id="3.30.540.10">
    <property type="entry name" value="Fructose-1,6-Bisphosphatase, subunit A, domain 1"/>
    <property type="match status" value="1"/>
</dbReference>
<dbReference type="HAMAP" id="MF_01855">
    <property type="entry name" value="FBPase_class1"/>
    <property type="match status" value="1"/>
</dbReference>
<dbReference type="InterPro" id="IPR044015">
    <property type="entry name" value="FBPase_C_dom"/>
</dbReference>
<dbReference type="InterPro" id="IPR000146">
    <property type="entry name" value="FBPase_class-1"/>
</dbReference>
<dbReference type="InterPro" id="IPR033391">
    <property type="entry name" value="FBPase_N"/>
</dbReference>
<dbReference type="InterPro" id="IPR028343">
    <property type="entry name" value="FBPtase"/>
</dbReference>
<dbReference type="InterPro" id="IPR020548">
    <property type="entry name" value="Fructose_bisphosphatase_AS"/>
</dbReference>
<dbReference type="NCBIfam" id="NF006778">
    <property type="entry name" value="PRK09293.1-1"/>
    <property type="match status" value="1"/>
</dbReference>
<dbReference type="NCBIfam" id="NF006779">
    <property type="entry name" value="PRK09293.1-3"/>
    <property type="match status" value="1"/>
</dbReference>
<dbReference type="PANTHER" id="PTHR11556">
    <property type="entry name" value="FRUCTOSE-1,6-BISPHOSPHATASE-RELATED"/>
    <property type="match status" value="1"/>
</dbReference>
<dbReference type="PANTHER" id="PTHR11556:SF35">
    <property type="entry name" value="SEDOHEPTULOSE-1,7-BISPHOSPHATASE, CHLOROPLASTIC"/>
    <property type="match status" value="1"/>
</dbReference>
<dbReference type="Pfam" id="PF00316">
    <property type="entry name" value="FBPase"/>
    <property type="match status" value="1"/>
</dbReference>
<dbReference type="Pfam" id="PF18913">
    <property type="entry name" value="FBPase_C"/>
    <property type="match status" value="1"/>
</dbReference>
<dbReference type="PIRSF" id="PIRSF500210">
    <property type="entry name" value="FBPtase"/>
    <property type="match status" value="1"/>
</dbReference>
<dbReference type="PIRSF" id="PIRSF000904">
    <property type="entry name" value="FBPtase_SBPase"/>
    <property type="match status" value="1"/>
</dbReference>
<dbReference type="PRINTS" id="PR00115">
    <property type="entry name" value="F16BPHPHTASE"/>
</dbReference>
<dbReference type="SUPFAM" id="SSF56655">
    <property type="entry name" value="Carbohydrate phosphatase"/>
    <property type="match status" value="1"/>
</dbReference>
<dbReference type="PROSITE" id="PS00124">
    <property type="entry name" value="FBPASE"/>
    <property type="match status" value="1"/>
</dbReference>
<organism>
    <name type="scientific">Salmonella choleraesuis (strain SC-B67)</name>
    <dbReference type="NCBI Taxonomy" id="321314"/>
    <lineage>
        <taxon>Bacteria</taxon>
        <taxon>Pseudomonadati</taxon>
        <taxon>Pseudomonadota</taxon>
        <taxon>Gammaproteobacteria</taxon>
        <taxon>Enterobacterales</taxon>
        <taxon>Enterobacteriaceae</taxon>
        <taxon>Salmonella</taxon>
    </lineage>
</organism>
<evidence type="ECO:0000255" key="1">
    <source>
        <dbReference type="HAMAP-Rule" id="MF_01855"/>
    </source>
</evidence>
<name>F16PA_SALCH</name>
<gene>
    <name evidence="1" type="primary">fbp</name>
    <name type="ordered locus">SCH_4289</name>
</gene>
<accession>Q57GG7</accession>
<sequence>MKTLGEFIVEKQHEFSQATGELTALLSAIKLGAKIIHRDINKAGLVDILGASGAENVQGEVQQKLDLFANEKLKAALKARDIVAGIASEEEDEIVVFEGCEHAKYVVLMDPLDGSSNIDVNVSVGTIFSIYRRVTPVGTPVTEEDFLQPGNKQVAAGYVVYGSSTMLVYTTGCGVHAFTYDPSLGVFCLCQERMRFPEKGKTYSINEGNYIKFPNGVKKYIKFCQEEDSSTSRPYTSRYIGSLVADFHRNLLKGGIYLYPSTASHPQGKLRLLYECNPMAFLAEQAGGKASDGKERILDIIPESLHQRRSFFVGNRHMVDDVERFIREYPDA</sequence>